<gene>
    <name type="primary">MT-CYB</name>
    <name type="synonym">COB</name>
    <name type="synonym">CYTB</name>
    <name type="synonym">MTCYB</name>
</gene>
<dbReference type="EMBL" id="AY920906">
    <property type="protein sequence ID" value="AAX21798.1"/>
    <property type="molecule type" value="Genomic_DNA"/>
</dbReference>
<dbReference type="SMR" id="Q5BQG8"/>
<dbReference type="GO" id="GO:0005743">
    <property type="term" value="C:mitochondrial inner membrane"/>
    <property type="evidence" value="ECO:0007669"/>
    <property type="project" value="UniProtKB-SubCell"/>
</dbReference>
<dbReference type="GO" id="GO:0045275">
    <property type="term" value="C:respiratory chain complex III"/>
    <property type="evidence" value="ECO:0007669"/>
    <property type="project" value="InterPro"/>
</dbReference>
<dbReference type="GO" id="GO:0046872">
    <property type="term" value="F:metal ion binding"/>
    <property type="evidence" value="ECO:0007669"/>
    <property type="project" value="UniProtKB-KW"/>
</dbReference>
<dbReference type="GO" id="GO:0008121">
    <property type="term" value="F:ubiquinol-cytochrome-c reductase activity"/>
    <property type="evidence" value="ECO:0007669"/>
    <property type="project" value="InterPro"/>
</dbReference>
<dbReference type="GO" id="GO:0006122">
    <property type="term" value="P:mitochondrial electron transport, ubiquinol to cytochrome c"/>
    <property type="evidence" value="ECO:0007669"/>
    <property type="project" value="TreeGrafter"/>
</dbReference>
<dbReference type="CDD" id="cd00290">
    <property type="entry name" value="cytochrome_b_C"/>
    <property type="match status" value="1"/>
</dbReference>
<dbReference type="CDD" id="cd00284">
    <property type="entry name" value="Cytochrome_b_N"/>
    <property type="match status" value="1"/>
</dbReference>
<dbReference type="FunFam" id="1.20.810.10:FF:000002">
    <property type="entry name" value="Cytochrome b"/>
    <property type="match status" value="1"/>
</dbReference>
<dbReference type="Gene3D" id="1.20.810.10">
    <property type="entry name" value="Cytochrome Bc1 Complex, Chain C"/>
    <property type="match status" value="1"/>
</dbReference>
<dbReference type="InterPro" id="IPR005798">
    <property type="entry name" value="Cyt_b/b6_C"/>
</dbReference>
<dbReference type="InterPro" id="IPR036150">
    <property type="entry name" value="Cyt_b/b6_C_sf"/>
</dbReference>
<dbReference type="InterPro" id="IPR005797">
    <property type="entry name" value="Cyt_b/b6_N"/>
</dbReference>
<dbReference type="InterPro" id="IPR027387">
    <property type="entry name" value="Cytb/b6-like_sf"/>
</dbReference>
<dbReference type="InterPro" id="IPR030689">
    <property type="entry name" value="Cytochrome_b"/>
</dbReference>
<dbReference type="InterPro" id="IPR048260">
    <property type="entry name" value="Cytochrome_b_C_euk/bac"/>
</dbReference>
<dbReference type="InterPro" id="IPR048259">
    <property type="entry name" value="Cytochrome_b_N_euk/bac"/>
</dbReference>
<dbReference type="InterPro" id="IPR016174">
    <property type="entry name" value="Di-haem_cyt_TM"/>
</dbReference>
<dbReference type="PANTHER" id="PTHR19271">
    <property type="entry name" value="CYTOCHROME B"/>
    <property type="match status" value="1"/>
</dbReference>
<dbReference type="PANTHER" id="PTHR19271:SF16">
    <property type="entry name" value="CYTOCHROME B"/>
    <property type="match status" value="1"/>
</dbReference>
<dbReference type="Pfam" id="PF00032">
    <property type="entry name" value="Cytochrom_B_C"/>
    <property type="match status" value="1"/>
</dbReference>
<dbReference type="Pfam" id="PF00033">
    <property type="entry name" value="Cytochrome_B"/>
    <property type="match status" value="1"/>
</dbReference>
<dbReference type="PIRSF" id="PIRSF038885">
    <property type="entry name" value="COB"/>
    <property type="match status" value="1"/>
</dbReference>
<dbReference type="SUPFAM" id="SSF81648">
    <property type="entry name" value="a domain/subunit of cytochrome bc1 complex (Ubiquinol-cytochrome c reductase)"/>
    <property type="match status" value="1"/>
</dbReference>
<dbReference type="SUPFAM" id="SSF81342">
    <property type="entry name" value="Transmembrane di-heme cytochromes"/>
    <property type="match status" value="1"/>
</dbReference>
<dbReference type="PROSITE" id="PS51003">
    <property type="entry name" value="CYTB_CTER"/>
    <property type="match status" value="1"/>
</dbReference>
<dbReference type="PROSITE" id="PS51002">
    <property type="entry name" value="CYTB_NTER"/>
    <property type="match status" value="1"/>
</dbReference>
<organism>
    <name type="scientific">Sus cebifrons</name>
    <name type="common">Visayan warty pig</name>
    <dbReference type="NCBI Taxonomy" id="315377"/>
    <lineage>
        <taxon>Eukaryota</taxon>
        <taxon>Metazoa</taxon>
        <taxon>Chordata</taxon>
        <taxon>Craniata</taxon>
        <taxon>Vertebrata</taxon>
        <taxon>Euteleostomi</taxon>
        <taxon>Mammalia</taxon>
        <taxon>Eutheria</taxon>
        <taxon>Laurasiatheria</taxon>
        <taxon>Artiodactyla</taxon>
        <taxon>Suina</taxon>
        <taxon>Suidae</taxon>
        <taxon>Sus</taxon>
    </lineage>
</organism>
<name>CYB_SUSCE</name>
<protein>
    <recommendedName>
        <fullName>Cytochrome b</fullName>
    </recommendedName>
    <alternativeName>
        <fullName>Complex III subunit 3</fullName>
    </alternativeName>
    <alternativeName>
        <fullName>Complex III subunit III</fullName>
    </alternativeName>
    <alternativeName>
        <fullName>Cytochrome b-c1 complex subunit 3</fullName>
    </alternativeName>
    <alternativeName>
        <fullName>Ubiquinol-cytochrome-c reductase complex cytochrome b subunit</fullName>
    </alternativeName>
</protein>
<evidence type="ECO:0000250" key="1"/>
<evidence type="ECO:0000250" key="2">
    <source>
        <dbReference type="UniProtKB" id="P00157"/>
    </source>
</evidence>
<evidence type="ECO:0000255" key="3">
    <source>
        <dbReference type="PROSITE-ProRule" id="PRU00967"/>
    </source>
</evidence>
<evidence type="ECO:0000255" key="4">
    <source>
        <dbReference type="PROSITE-ProRule" id="PRU00968"/>
    </source>
</evidence>
<geneLocation type="mitochondrion"/>
<keyword id="KW-0249">Electron transport</keyword>
<keyword id="KW-0349">Heme</keyword>
<keyword id="KW-0408">Iron</keyword>
<keyword id="KW-0472">Membrane</keyword>
<keyword id="KW-0479">Metal-binding</keyword>
<keyword id="KW-0496">Mitochondrion</keyword>
<keyword id="KW-0999">Mitochondrion inner membrane</keyword>
<keyword id="KW-0679">Respiratory chain</keyword>
<keyword id="KW-0812">Transmembrane</keyword>
<keyword id="KW-1133">Transmembrane helix</keyword>
<keyword id="KW-0813">Transport</keyword>
<keyword id="KW-0830">Ubiquinone</keyword>
<accession>Q5BQG8</accession>
<sequence>MTNIRKSHPLMKIINNAFIDLPAPSNISSWWNFGSLLGICLILQILTGLFLAMHYTSDTTTAFSSVTHICRDVNYGWIIRYLHANGASMFFICLFIHVGRGMYYGSYMFRETWNIGVILLFTVMATAFMGYVLPWGQMSFWGATVITNLLSAIPYIGTNLVEWIWGGFSVDKATLTRFFAFHFILPFIITALATVHLLFLHETGSNNPTGISSDMDKIPFHPYYTIKDILGALFMMLILLILVLFSPDLLGDPDNYTPANPLSTPTHIKPEWYFLFAYAILRSIPNKLGGVLALVASILILILMRMLHTSKQRSMMFRPLSQCLFWMLVADLIALTWIGGQAVEHPFIIIGQLASILNFLIILVLMPMPSIIENNLLKW</sequence>
<feature type="chain" id="PRO_0000254763" description="Cytochrome b">
    <location>
        <begin position="1"/>
        <end position="379"/>
    </location>
</feature>
<feature type="transmembrane region" description="Helical" evidence="2">
    <location>
        <begin position="33"/>
        <end position="53"/>
    </location>
</feature>
<feature type="transmembrane region" description="Helical" evidence="2">
    <location>
        <begin position="77"/>
        <end position="98"/>
    </location>
</feature>
<feature type="transmembrane region" description="Helical" evidence="2">
    <location>
        <begin position="113"/>
        <end position="133"/>
    </location>
</feature>
<feature type="transmembrane region" description="Helical" evidence="2">
    <location>
        <begin position="178"/>
        <end position="198"/>
    </location>
</feature>
<feature type="transmembrane region" description="Helical" evidence="2">
    <location>
        <begin position="226"/>
        <end position="246"/>
    </location>
</feature>
<feature type="transmembrane region" description="Helical" evidence="2">
    <location>
        <begin position="288"/>
        <end position="308"/>
    </location>
</feature>
<feature type="transmembrane region" description="Helical" evidence="2">
    <location>
        <begin position="320"/>
        <end position="340"/>
    </location>
</feature>
<feature type="transmembrane region" description="Helical" evidence="2">
    <location>
        <begin position="347"/>
        <end position="367"/>
    </location>
</feature>
<feature type="binding site" description="axial binding residue" evidence="2">
    <location>
        <position position="83"/>
    </location>
    <ligand>
        <name>heme b</name>
        <dbReference type="ChEBI" id="CHEBI:60344"/>
        <label>b562</label>
    </ligand>
    <ligandPart>
        <name>Fe</name>
        <dbReference type="ChEBI" id="CHEBI:18248"/>
    </ligandPart>
</feature>
<feature type="binding site" description="axial binding residue" evidence="2">
    <location>
        <position position="97"/>
    </location>
    <ligand>
        <name>heme b</name>
        <dbReference type="ChEBI" id="CHEBI:60344"/>
        <label>b566</label>
    </ligand>
    <ligandPart>
        <name>Fe</name>
        <dbReference type="ChEBI" id="CHEBI:18248"/>
    </ligandPart>
</feature>
<feature type="binding site" description="axial binding residue" evidence="2">
    <location>
        <position position="182"/>
    </location>
    <ligand>
        <name>heme b</name>
        <dbReference type="ChEBI" id="CHEBI:60344"/>
        <label>b562</label>
    </ligand>
    <ligandPart>
        <name>Fe</name>
        <dbReference type="ChEBI" id="CHEBI:18248"/>
    </ligandPart>
</feature>
<feature type="binding site" description="axial binding residue" evidence="2">
    <location>
        <position position="196"/>
    </location>
    <ligand>
        <name>heme b</name>
        <dbReference type="ChEBI" id="CHEBI:60344"/>
        <label>b566</label>
    </ligand>
    <ligandPart>
        <name>Fe</name>
        <dbReference type="ChEBI" id="CHEBI:18248"/>
    </ligandPart>
</feature>
<feature type="binding site" evidence="2">
    <location>
        <position position="201"/>
    </location>
    <ligand>
        <name>a ubiquinone</name>
        <dbReference type="ChEBI" id="CHEBI:16389"/>
    </ligand>
</feature>
<proteinExistence type="inferred from homology"/>
<comment type="function">
    <text evidence="2">Component of the ubiquinol-cytochrome c reductase complex (complex III or cytochrome b-c1 complex) that is part of the mitochondrial respiratory chain. The b-c1 complex mediates electron transfer from ubiquinol to cytochrome c. Contributes to the generation of a proton gradient across the mitochondrial membrane that is then used for ATP synthesis.</text>
</comment>
<comment type="cofactor">
    <cofactor evidence="2">
        <name>heme b</name>
        <dbReference type="ChEBI" id="CHEBI:60344"/>
    </cofactor>
    <text evidence="2">Binds 2 heme b groups non-covalently.</text>
</comment>
<comment type="subunit">
    <text evidence="2">The cytochrome bc1 complex contains 11 subunits: 3 respiratory subunits (MT-CYB, CYC1 and UQCRFS1), 2 core proteins (UQCRC1 and UQCRC2) and 6 low-molecular weight proteins (UQCRH/QCR6, UQCRB/QCR7, UQCRQ/QCR8, UQCR10/QCR9, UQCR11/QCR10 and a cleavage product of UQCRFS1). This cytochrome bc1 complex then forms a dimer.</text>
</comment>
<comment type="subcellular location">
    <subcellularLocation>
        <location evidence="2">Mitochondrion inner membrane</location>
        <topology evidence="2">Multi-pass membrane protein</topology>
    </subcellularLocation>
</comment>
<comment type="miscellaneous">
    <text evidence="1">Heme 1 (or BL or b562) is low-potential and absorbs at about 562 nm, and heme 2 (or BH or b566) is high-potential and absorbs at about 566 nm.</text>
</comment>
<comment type="similarity">
    <text evidence="3 4">Belongs to the cytochrome b family.</text>
</comment>
<comment type="caution">
    <text evidence="2">The full-length protein contains only eight transmembrane helices, not nine as predicted by bioinformatics tools.</text>
</comment>
<reference key="1">
    <citation type="submission" date="2005-02" db="EMBL/GenBank/DDBJ databases">
        <title>Analysis of complete DNA sequences of the mitochondrial 16S rRNA and cytochrome b genes of the Philippine wild pig (Sus philippensis), Visayan warty pig (Sus cebifrons), a local pig hybrid (Sus philippensis and Sus barbatus), and two strains of domesticated hogs.</title>
        <authorList>
            <person name="Ponce de Leon M.I.A.Z."/>
            <person name="Hedreyda C.T."/>
        </authorList>
    </citation>
    <scope>NUCLEOTIDE SEQUENCE [GENOMIC DNA]</scope>
</reference>